<evidence type="ECO:0000250" key="1"/>
<evidence type="ECO:0000250" key="2">
    <source>
        <dbReference type="UniProtKB" id="Q8GZD5"/>
    </source>
</evidence>
<evidence type="ECO:0000255" key="3"/>
<evidence type="ECO:0000255" key="4">
    <source>
        <dbReference type="PROSITE-ProRule" id="PRU01098"/>
    </source>
</evidence>
<evidence type="ECO:0000255" key="5">
    <source>
        <dbReference type="PROSITE-ProRule" id="PRU10064"/>
    </source>
</evidence>
<evidence type="ECO:0000269" key="6">
    <source>
    </source>
</evidence>
<evidence type="ECO:0000269" key="7">
    <source>
    </source>
</evidence>
<evidence type="ECO:0000269" key="8">
    <source>
    </source>
</evidence>
<evidence type="ECO:0000269" key="9">
    <source>
    </source>
</evidence>
<evidence type="ECO:0000305" key="10"/>
<evidence type="ECO:0000305" key="11">
    <source>
    </source>
</evidence>
<gene>
    <name type="primary">XTH24</name>
    <name type="synonym">MERI-5</name>
    <name type="synonym">MERI5B</name>
    <name type="synonym">SEN4</name>
    <name type="ordered locus">At4g30270</name>
    <name type="ORF">F9N11.120</name>
</gene>
<organism>
    <name type="scientific">Arabidopsis thaliana</name>
    <name type="common">Mouse-ear cress</name>
    <dbReference type="NCBI Taxonomy" id="3702"/>
    <lineage>
        <taxon>Eukaryota</taxon>
        <taxon>Viridiplantae</taxon>
        <taxon>Streptophyta</taxon>
        <taxon>Embryophyta</taxon>
        <taxon>Tracheophyta</taxon>
        <taxon>Spermatophyta</taxon>
        <taxon>Magnoliopsida</taxon>
        <taxon>eudicotyledons</taxon>
        <taxon>Gunneridae</taxon>
        <taxon>Pentapetalae</taxon>
        <taxon>rosids</taxon>
        <taxon>malvids</taxon>
        <taxon>Brassicales</taxon>
        <taxon>Brassicaceae</taxon>
        <taxon>Camelineae</taxon>
        <taxon>Arabidopsis</taxon>
    </lineage>
</organism>
<proteinExistence type="evidence at protein level"/>
<comment type="function">
    <text>Catalyzes xyloglucan endohydrolysis (XEH) and/or endotransglycosylation (XET). Cleaves and religates xyloglucan polymers, an essential constituent of the primary cell wall, and thereby participates in cell wall construction of growing tissues. May be required during development to modify the walls of cells under mechanical stress.</text>
</comment>
<comment type="catalytic activity">
    <reaction evidence="6">
        <text>breaks a beta-(1-&gt;4) bond in the backbone of a xyloglucan and transfers the xyloglucanyl segment on to O-4 of the non-reducing terminal glucose residue of an acceptor, which can be a xyloglucan or an oligosaccharide of xyloglucan.</text>
        <dbReference type="EC" id="2.4.1.207"/>
    </reaction>
</comment>
<comment type="subcellular location">
    <subcellularLocation>
        <location evidence="10">Secreted</location>
        <location evidence="10">Cell wall</location>
    </subcellularLocation>
    <subcellularLocation>
        <location evidence="10">Secreted</location>
        <location evidence="10">Extracellular space</location>
        <location evidence="10">Apoplast</location>
    </subcellularLocation>
</comment>
<comment type="tissue specificity">
    <text evidence="7 9">Highly expressed. Predominantly expressed in stems. Expressed in shoot apical meristems, also found in seedlings and meristems.</text>
</comment>
<comment type="induction">
    <text evidence="8">May be transcriptionally regulated by ANGUSTIFOLIA.</text>
</comment>
<comment type="PTM">
    <text evidence="1">Contains at least one intrachain disulfide bond essential for its enzymatic activity.</text>
</comment>
<comment type="PTM">
    <text evidence="6">N-glycosylated; essential for its enzymatic activity.</text>
</comment>
<comment type="similarity">
    <text evidence="10">Belongs to the glycosyl hydrolase 16 family. XTH group 2 subfamily.</text>
</comment>
<comment type="sequence caution" evidence="10">
    <conflict type="frameshift">
        <sequence resource="EMBL-CDS" id="AAA32828"/>
    </conflict>
</comment>
<comment type="sequence caution" evidence="10">
    <conflict type="frameshift">
        <sequence resource="EMBL-CDS" id="CAA79012"/>
    </conflict>
</comment>
<sequence length="269" mass="30756">MSPFKIFFFTTLLVAAFSVSAADFNTDVNVAWGNGRGKILNNGQLLTLSLDKSSGSGFQSKTEYLFGKIDMQIKLVPGNSAGTVTTFYLKSEGSTWDEIDFEFLGNMSGDPYTLHTNVYTQGKGDKEQQFHLWFDPTANFHTYSILWNPQRIILTVDDTPIREFKNYESLGVLFPKNKPMRMYASLWNADDWATRGGLVKTDWSKAPFMASYRNIKIDSKPNSNWYTQEMDSTSQARLKWVQKNYMIYNYCTDHRRFPQGAPKECTTSS</sequence>
<reference key="1">
    <citation type="journal article" date="1991" name="Plant Cell">
        <title>Molecular cloning and characterization of genes expressed in shoot apical meristems.</title>
        <authorList>
            <person name="Medford J.I."/>
            <person name="Elmer J.S."/>
            <person name="Klee H.J."/>
        </authorList>
    </citation>
    <scope>NUCLEOTIDE SEQUENCE [GENOMIC DNA]</scope>
    <scope>TISSUE SPECIFICITY</scope>
</reference>
<reference key="2">
    <citation type="submission" date="1995-07" db="EMBL/GenBank/DDBJ databases">
        <authorList>
            <person name="Kamimai T."/>
            <person name="Tomita E."/>
            <person name="Nishitani K."/>
        </authorList>
    </citation>
    <scope>NUCLEOTIDE SEQUENCE [MRNA]</scope>
    <source>
        <strain>cv. Columbia</strain>
    </source>
</reference>
<reference key="3">
    <citation type="journal article" date="1999" name="Nature">
        <title>Sequence and analysis of chromosome 4 of the plant Arabidopsis thaliana.</title>
        <authorList>
            <person name="Mayer K.F.X."/>
            <person name="Schueller C."/>
            <person name="Wambutt R."/>
            <person name="Murphy G."/>
            <person name="Volckaert G."/>
            <person name="Pohl T."/>
            <person name="Duesterhoeft A."/>
            <person name="Stiekema W."/>
            <person name="Entian K.-D."/>
            <person name="Terryn N."/>
            <person name="Harris B."/>
            <person name="Ansorge W."/>
            <person name="Brandt P."/>
            <person name="Grivell L.A."/>
            <person name="Rieger M."/>
            <person name="Weichselgartner M."/>
            <person name="de Simone V."/>
            <person name="Obermaier B."/>
            <person name="Mache R."/>
            <person name="Mueller M."/>
            <person name="Kreis M."/>
            <person name="Delseny M."/>
            <person name="Puigdomenech P."/>
            <person name="Watson M."/>
            <person name="Schmidtheini T."/>
            <person name="Reichert B."/>
            <person name="Portetelle D."/>
            <person name="Perez-Alonso M."/>
            <person name="Boutry M."/>
            <person name="Bancroft I."/>
            <person name="Vos P."/>
            <person name="Hoheisel J."/>
            <person name="Zimmermann W."/>
            <person name="Wedler H."/>
            <person name="Ridley P."/>
            <person name="Langham S.-A."/>
            <person name="McCullagh B."/>
            <person name="Bilham L."/>
            <person name="Robben J."/>
            <person name="van der Schueren J."/>
            <person name="Grymonprez B."/>
            <person name="Chuang Y.-J."/>
            <person name="Vandenbussche F."/>
            <person name="Braeken M."/>
            <person name="Weltjens I."/>
            <person name="Voet M."/>
            <person name="Bastiaens I."/>
            <person name="Aert R."/>
            <person name="Defoor E."/>
            <person name="Weitzenegger T."/>
            <person name="Bothe G."/>
            <person name="Ramsperger U."/>
            <person name="Hilbert H."/>
            <person name="Braun M."/>
            <person name="Holzer E."/>
            <person name="Brandt A."/>
            <person name="Peters S."/>
            <person name="van Staveren M."/>
            <person name="Dirkse W."/>
            <person name="Mooijman P."/>
            <person name="Klein Lankhorst R."/>
            <person name="Rose M."/>
            <person name="Hauf J."/>
            <person name="Koetter P."/>
            <person name="Berneiser S."/>
            <person name="Hempel S."/>
            <person name="Feldpausch M."/>
            <person name="Lamberth S."/>
            <person name="Van den Daele H."/>
            <person name="De Keyser A."/>
            <person name="Buysshaert C."/>
            <person name="Gielen J."/>
            <person name="Villarroel R."/>
            <person name="De Clercq R."/>
            <person name="van Montagu M."/>
            <person name="Rogers J."/>
            <person name="Cronin A."/>
            <person name="Quail M.A."/>
            <person name="Bray-Allen S."/>
            <person name="Clark L."/>
            <person name="Doggett J."/>
            <person name="Hall S."/>
            <person name="Kay M."/>
            <person name="Lennard N."/>
            <person name="McLay K."/>
            <person name="Mayes R."/>
            <person name="Pettett A."/>
            <person name="Rajandream M.A."/>
            <person name="Lyne M."/>
            <person name="Benes V."/>
            <person name="Rechmann S."/>
            <person name="Borkova D."/>
            <person name="Bloecker H."/>
            <person name="Scharfe M."/>
            <person name="Grimm M."/>
            <person name="Loehnert T.-H."/>
            <person name="Dose S."/>
            <person name="de Haan M."/>
            <person name="Maarse A.C."/>
            <person name="Schaefer M."/>
            <person name="Mueller-Auer S."/>
            <person name="Gabel C."/>
            <person name="Fuchs M."/>
            <person name="Fartmann B."/>
            <person name="Granderath K."/>
            <person name="Dauner D."/>
            <person name="Herzl A."/>
            <person name="Neumann S."/>
            <person name="Argiriou A."/>
            <person name="Vitale D."/>
            <person name="Liguori R."/>
            <person name="Piravandi E."/>
            <person name="Massenet O."/>
            <person name="Quigley F."/>
            <person name="Clabauld G."/>
            <person name="Muendlein A."/>
            <person name="Felber R."/>
            <person name="Schnabl S."/>
            <person name="Hiller R."/>
            <person name="Schmidt W."/>
            <person name="Lecharny A."/>
            <person name="Aubourg S."/>
            <person name="Chefdor F."/>
            <person name="Cooke R."/>
            <person name="Berger C."/>
            <person name="Monfort A."/>
            <person name="Casacuberta E."/>
            <person name="Gibbons T."/>
            <person name="Weber N."/>
            <person name="Vandenbol M."/>
            <person name="Bargues M."/>
            <person name="Terol J."/>
            <person name="Torres A."/>
            <person name="Perez-Perez A."/>
            <person name="Purnelle B."/>
            <person name="Bent E."/>
            <person name="Johnson S."/>
            <person name="Tacon D."/>
            <person name="Jesse T."/>
            <person name="Heijnen L."/>
            <person name="Schwarz S."/>
            <person name="Scholler P."/>
            <person name="Heber S."/>
            <person name="Francs P."/>
            <person name="Bielke C."/>
            <person name="Frishman D."/>
            <person name="Haase D."/>
            <person name="Lemcke K."/>
            <person name="Mewes H.-W."/>
            <person name="Stocker S."/>
            <person name="Zaccaria P."/>
            <person name="Bevan M."/>
            <person name="Wilson R.K."/>
            <person name="de la Bastide M."/>
            <person name="Habermann K."/>
            <person name="Parnell L."/>
            <person name="Dedhia N."/>
            <person name="Gnoj L."/>
            <person name="Schutz K."/>
            <person name="Huang E."/>
            <person name="Spiegel L."/>
            <person name="Sekhon M."/>
            <person name="Murray J."/>
            <person name="Sheet P."/>
            <person name="Cordes M."/>
            <person name="Abu-Threideh J."/>
            <person name="Stoneking T."/>
            <person name="Kalicki J."/>
            <person name="Graves T."/>
            <person name="Harmon G."/>
            <person name="Edwards J."/>
            <person name="Latreille P."/>
            <person name="Courtney L."/>
            <person name="Cloud J."/>
            <person name="Abbott A."/>
            <person name="Scott K."/>
            <person name="Johnson D."/>
            <person name="Minx P."/>
            <person name="Bentley D."/>
            <person name="Fulton B."/>
            <person name="Miller N."/>
            <person name="Greco T."/>
            <person name="Kemp K."/>
            <person name="Kramer J."/>
            <person name="Fulton L."/>
            <person name="Mardis E."/>
            <person name="Dante M."/>
            <person name="Pepin K."/>
            <person name="Hillier L.W."/>
            <person name="Nelson J."/>
            <person name="Spieth J."/>
            <person name="Ryan E."/>
            <person name="Andrews S."/>
            <person name="Geisel C."/>
            <person name="Layman D."/>
            <person name="Du H."/>
            <person name="Ali J."/>
            <person name="Berghoff A."/>
            <person name="Jones K."/>
            <person name="Drone K."/>
            <person name="Cotton M."/>
            <person name="Joshu C."/>
            <person name="Antonoiu B."/>
            <person name="Zidanic M."/>
            <person name="Strong C."/>
            <person name="Sun H."/>
            <person name="Lamar B."/>
            <person name="Yordan C."/>
            <person name="Ma P."/>
            <person name="Zhong J."/>
            <person name="Preston R."/>
            <person name="Vil D."/>
            <person name="Shekher M."/>
            <person name="Matero A."/>
            <person name="Shah R."/>
            <person name="Swaby I.K."/>
            <person name="O'Shaughnessy A."/>
            <person name="Rodriguez M."/>
            <person name="Hoffman J."/>
            <person name="Till S."/>
            <person name="Granat S."/>
            <person name="Shohdy N."/>
            <person name="Hasegawa A."/>
            <person name="Hameed A."/>
            <person name="Lodhi M."/>
            <person name="Johnson A."/>
            <person name="Chen E."/>
            <person name="Marra M.A."/>
            <person name="Martienssen R."/>
            <person name="McCombie W.R."/>
        </authorList>
    </citation>
    <scope>NUCLEOTIDE SEQUENCE [LARGE SCALE GENOMIC DNA]</scope>
    <source>
        <strain>cv. Columbia</strain>
    </source>
</reference>
<reference key="4">
    <citation type="journal article" date="2017" name="Plant J.">
        <title>Araport11: a complete reannotation of the Arabidopsis thaliana reference genome.</title>
        <authorList>
            <person name="Cheng C.Y."/>
            <person name="Krishnakumar V."/>
            <person name="Chan A.P."/>
            <person name="Thibaud-Nissen F."/>
            <person name="Schobel S."/>
            <person name="Town C.D."/>
        </authorList>
    </citation>
    <scope>GENOME REANNOTATION</scope>
    <source>
        <strain>cv. Columbia</strain>
    </source>
</reference>
<reference key="5">
    <citation type="journal article" date="2003" name="Science">
        <title>Empirical analysis of transcriptional activity in the Arabidopsis genome.</title>
        <authorList>
            <person name="Yamada K."/>
            <person name="Lim J."/>
            <person name="Dale J.M."/>
            <person name="Chen H."/>
            <person name="Shinn P."/>
            <person name="Palm C.J."/>
            <person name="Southwick A.M."/>
            <person name="Wu H.C."/>
            <person name="Kim C.J."/>
            <person name="Nguyen M."/>
            <person name="Pham P.K."/>
            <person name="Cheuk R.F."/>
            <person name="Karlin-Newmann G."/>
            <person name="Liu S.X."/>
            <person name="Lam B."/>
            <person name="Sakano H."/>
            <person name="Wu T."/>
            <person name="Yu G."/>
            <person name="Miranda M."/>
            <person name="Quach H.L."/>
            <person name="Tripp M."/>
            <person name="Chang C.H."/>
            <person name="Lee J.M."/>
            <person name="Toriumi M.J."/>
            <person name="Chan M.M."/>
            <person name="Tang C.C."/>
            <person name="Onodera C.S."/>
            <person name="Deng J.M."/>
            <person name="Akiyama K."/>
            <person name="Ansari Y."/>
            <person name="Arakawa T."/>
            <person name="Banh J."/>
            <person name="Banno F."/>
            <person name="Bowser L."/>
            <person name="Brooks S.Y."/>
            <person name="Carninci P."/>
            <person name="Chao Q."/>
            <person name="Choy N."/>
            <person name="Enju A."/>
            <person name="Goldsmith A.D."/>
            <person name="Gurjal M."/>
            <person name="Hansen N.F."/>
            <person name="Hayashizaki Y."/>
            <person name="Johnson-Hopson C."/>
            <person name="Hsuan V.W."/>
            <person name="Iida K."/>
            <person name="Karnes M."/>
            <person name="Khan S."/>
            <person name="Koesema E."/>
            <person name="Ishida J."/>
            <person name="Jiang P.X."/>
            <person name="Jones T."/>
            <person name="Kawai J."/>
            <person name="Kamiya A."/>
            <person name="Meyers C."/>
            <person name="Nakajima M."/>
            <person name="Narusaka M."/>
            <person name="Seki M."/>
            <person name="Sakurai T."/>
            <person name="Satou M."/>
            <person name="Tamse R."/>
            <person name="Vaysberg M."/>
            <person name="Wallender E.K."/>
            <person name="Wong C."/>
            <person name="Yamamura Y."/>
            <person name="Yuan S."/>
            <person name="Shinozaki K."/>
            <person name="Davis R.W."/>
            <person name="Theologis A."/>
            <person name="Ecker J.R."/>
        </authorList>
    </citation>
    <scope>NUCLEOTIDE SEQUENCE [LARGE SCALE MRNA]</scope>
    <source>
        <strain>cv. Columbia</strain>
    </source>
</reference>
<reference key="6">
    <citation type="submission" date="2002-03" db="EMBL/GenBank/DDBJ databases">
        <title>Full-length cDNA from Arabidopsis thaliana.</title>
        <authorList>
            <person name="Brover V.V."/>
            <person name="Troukhan M.E."/>
            <person name="Alexandrov N.A."/>
            <person name="Lu Y.-P."/>
            <person name="Flavell R.B."/>
            <person name="Feldmann K.A."/>
        </authorList>
    </citation>
    <scope>NUCLEOTIDE SEQUENCE [LARGE SCALE MRNA]</scope>
</reference>
<reference key="7">
    <citation type="journal article" date="1993" name="Plant J.">
        <title>An inventory of 1152 expressed sequence tags obtained by partial sequencing of cDNAs from Arabidopsis thaliana.</title>
        <authorList>
            <person name="Hoefte H."/>
            <person name="Desprez T."/>
            <person name="Amselem J."/>
            <person name="Chiapello H."/>
            <person name="Rouze P."/>
            <person name="Caboche M."/>
            <person name="Moisan A."/>
            <person name="Jourjon M.-F."/>
            <person name="Charpenteau J.-L."/>
            <person name="Berthomieu P."/>
            <person name="Guerrier D."/>
            <person name="Giraudat J."/>
            <person name="Quigley F."/>
            <person name="Thomas F."/>
            <person name="Yu D.-Y."/>
            <person name="Mache R."/>
            <person name="Raynal M."/>
            <person name="Cooke R."/>
            <person name="Grellet F."/>
            <person name="Delseny M."/>
            <person name="Parmentier Y."/>
            <person name="de Marcillac G."/>
            <person name="Gigot C."/>
            <person name="Fleck J."/>
            <person name="Philipps G."/>
            <person name="Axelos M."/>
            <person name="Bardet C."/>
            <person name="Tremousaygue D."/>
            <person name="Lescure B."/>
        </authorList>
    </citation>
    <scope>NUCLEOTIDE SEQUENCE [LARGE SCALE MRNA] OF 1-132</scope>
    <source>
        <strain>cv. Columbia</strain>
        <tissue>Green siliques</tissue>
    </source>
</reference>
<reference key="8">
    <citation type="journal article" date="1998" name="Plant Mol. Biol.">
        <title>Differential expression of senescence-associated mRNAs during leaf senescence induced by different senescence-inducing factors in Arabidopsis.</title>
        <authorList>
            <person name="Park J.-H."/>
            <person name="Oh S.A."/>
            <person name="Kim Y.H."/>
            <person name="Woo H.R."/>
            <person name="Nam H.G."/>
        </authorList>
    </citation>
    <scope>NUCLEOTIDE SEQUENCE [MRNA] OF 1-120</scope>
    <source>
        <strain>cv. Columbia</strain>
        <tissue>Leaf</tissue>
    </source>
</reference>
<reference key="9">
    <citation type="journal article" date="1995" name="Plant Mol. Biol.">
        <title>Characterisation of two tomato fruit-expressed cDNAs encoding xyloglucan endo-transglycosylase.</title>
        <authorList>
            <person name="Arrowsmith D.A."/>
            <person name="De Silva J."/>
        </authorList>
    </citation>
    <scope>NUCLEOTIDE SEQUENCE [GENOMIC DNA] OF 104-269</scope>
    <source>
        <strain>cv. Landsberg erecta</strain>
    </source>
</reference>
<reference key="10">
    <citation type="journal article" date="1999" name="Plant J.">
        <title>In vitro activities of four xyloglucan endotransglycosylases from Arabidopsis.</title>
        <authorList>
            <person name="Campbell P."/>
            <person name="Braam J."/>
        </authorList>
    </citation>
    <scope>ENZYME ACTIVITY</scope>
    <scope>GLYCOSYLATION</scope>
</reference>
<reference key="11">
    <citation type="journal article" date="2001" name="Plant Cell Physiol.">
        <title>A comprehensive expression analysis of all members of a gene family encoding cell-wall enzymes allowed us to predict cis-regulatory regions involved in cell-wall construction in specific organs of Arabidopsis.</title>
        <authorList>
            <person name="Yokoyama R."/>
            <person name="Nishitani K."/>
        </authorList>
    </citation>
    <scope>TISSUE SPECIFICITY</scope>
</reference>
<reference key="12">
    <citation type="journal article" date="2002" name="EMBO J.">
        <title>The ANGUSTIFOLIA gene of Arabidopsis, a plant CtBP gene, regulates leaf-cell expansion, the arrangement of cortical microtubules in leaf cells and expression of a gene involved in cell-wall formation.</title>
        <authorList>
            <person name="Kim G.-T."/>
            <person name="Shoda K."/>
            <person name="Tsuge T."/>
            <person name="Cho K.-H."/>
            <person name="Uchimiya H."/>
            <person name="Yokoyama R."/>
            <person name="Nishitani K."/>
            <person name="Tsukaya H."/>
        </authorList>
    </citation>
    <scope>INDUCTION</scope>
</reference>
<reference key="13">
    <citation type="journal article" date="2002" name="Plant Cell Physiol.">
        <title>The XTH family of enzymes involved in xyloglucan endotransglucosylation and endohydrolysis: current perspectives and a new unifying nomenclature.</title>
        <authorList>
            <person name="Rose J.K.C."/>
            <person name="Braam J."/>
            <person name="Fry S.C."/>
            <person name="Nishitani K."/>
        </authorList>
    </citation>
    <scope>NOMENCLATURE</scope>
</reference>
<name>XTH24_ARATH</name>
<dbReference type="EC" id="2.4.1.207"/>
<dbReference type="EMBL" id="M63166">
    <property type="protein sequence ID" value="AAA32828.1"/>
    <property type="status" value="ALT_FRAME"/>
    <property type="molecule type" value="Genomic_DNA"/>
</dbReference>
<dbReference type="EMBL" id="D63508">
    <property type="protein sequence ID" value="BAA09783.1"/>
    <property type="molecule type" value="mRNA"/>
</dbReference>
<dbReference type="EMBL" id="AL109796">
    <property type="protein sequence ID" value="CAB52471.1"/>
    <property type="molecule type" value="Genomic_DNA"/>
</dbReference>
<dbReference type="EMBL" id="AL161576">
    <property type="protein sequence ID" value="CAB81020.1"/>
    <property type="molecule type" value="Genomic_DNA"/>
</dbReference>
<dbReference type="EMBL" id="CP002687">
    <property type="protein sequence ID" value="AEE85745.1"/>
    <property type="molecule type" value="Genomic_DNA"/>
</dbReference>
<dbReference type="EMBL" id="AY035156">
    <property type="protein sequence ID" value="AAK59660.1"/>
    <property type="molecule type" value="mRNA"/>
</dbReference>
<dbReference type="EMBL" id="AY063027">
    <property type="protein sequence ID" value="AAL34201.1"/>
    <property type="molecule type" value="mRNA"/>
</dbReference>
<dbReference type="EMBL" id="AY085867">
    <property type="protein sequence ID" value="AAM63080.1"/>
    <property type="molecule type" value="mRNA"/>
</dbReference>
<dbReference type="EMBL" id="Z17602">
    <property type="protein sequence ID" value="CAA79012.1"/>
    <property type="status" value="ALT_FRAME"/>
    <property type="molecule type" value="mRNA"/>
</dbReference>
<dbReference type="EMBL" id="AF035384">
    <property type="protein sequence ID" value="AAC39467.1"/>
    <property type="molecule type" value="mRNA"/>
</dbReference>
<dbReference type="EMBL" id="X82683">
    <property type="protein sequence ID" value="CAA58001.1"/>
    <property type="molecule type" value="Genomic_DNA"/>
</dbReference>
<dbReference type="PIR" id="S61555">
    <property type="entry name" value="S61555"/>
</dbReference>
<dbReference type="PIR" id="T51754">
    <property type="entry name" value="T51754"/>
</dbReference>
<dbReference type="RefSeq" id="NP_194756.1">
    <property type="nucleotide sequence ID" value="NM_119173.4"/>
</dbReference>
<dbReference type="SMR" id="P24806"/>
<dbReference type="BioGRID" id="14437">
    <property type="interactions" value="1"/>
</dbReference>
<dbReference type="FunCoup" id="P24806">
    <property type="interactions" value="40"/>
</dbReference>
<dbReference type="IntAct" id="P24806">
    <property type="interactions" value="2"/>
</dbReference>
<dbReference type="STRING" id="3702.P24806"/>
<dbReference type="CAZy" id="GH16">
    <property type="family name" value="Glycoside Hydrolase Family 16"/>
</dbReference>
<dbReference type="GlyCosmos" id="P24806">
    <property type="glycosylation" value="1 site, No reported glycans"/>
</dbReference>
<dbReference type="GlyGen" id="P24806">
    <property type="glycosylation" value="1 site"/>
</dbReference>
<dbReference type="iPTMnet" id="P24806"/>
<dbReference type="PaxDb" id="3702-AT4G30270.1"/>
<dbReference type="ProteomicsDB" id="242455"/>
<dbReference type="EnsemblPlants" id="AT4G30270.1">
    <property type="protein sequence ID" value="AT4G30270.1"/>
    <property type="gene ID" value="AT4G30270"/>
</dbReference>
<dbReference type="GeneID" id="829150"/>
<dbReference type="Gramene" id="AT4G30270.1">
    <property type="protein sequence ID" value="AT4G30270.1"/>
    <property type="gene ID" value="AT4G30270"/>
</dbReference>
<dbReference type="KEGG" id="ath:AT4G30270"/>
<dbReference type="Araport" id="AT4G30270"/>
<dbReference type="TAIR" id="AT4G30270">
    <property type="gene designation" value="XTH24"/>
</dbReference>
<dbReference type="eggNOG" id="ENOG502QQ71">
    <property type="taxonomic scope" value="Eukaryota"/>
</dbReference>
<dbReference type="HOGENOM" id="CLU_048041_0_0_1"/>
<dbReference type="InParanoid" id="P24806"/>
<dbReference type="OMA" id="PNSNWYT"/>
<dbReference type="OrthoDB" id="4781at2759"/>
<dbReference type="PhylomeDB" id="P24806"/>
<dbReference type="BRENDA" id="2.4.1.207">
    <property type="organism ID" value="399"/>
</dbReference>
<dbReference type="PRO" id="PR:P24806"/>
<dbReference type="Proteomes" id="UP000006548">
    <property type="component" value="Chromosome 4"/>
</dbReference>
<dbReference type="ExpressionAtlas" id="P24806">
    <property type="expression patterns" value="baseline and differential"/>
</dbReference>
<dbReference type="GO" id="GO:0048046">
    <property type="term" value="C:apoplast"/>
    <property type="evidence" value="ECO:0007669"/>
    <property type="project" value="UniProtKB-SubCell"/>
</dbReference>
<dbReference type="GO" id="GO:0005737">
    <property type="term" value="C:cytoplasm"/>
    <property type="evidence" value="ECO:0007005"/>
    <property type="project" value="TAIR"/>
</dbReference>
<dbReference type="GO" id="GO:0005794">
    <property type="term" value="C:Golgi apparatus"/>
    <property type="evidence" value="ECO:0007005"/>
    <property type="project" value="TAIR"/>
</dbReference>
<dbReference type="GO" id="GO:0009505">
    <property type="term" value="C:plant-type cell wall"/>
    <property type="evidence" value="ECO:0007005"/>
    <property type="project" value="TAIR"/>
</dbReference>
<dbReference type="GO" id="GO:0005886">
    <property type="term" value="C:plasma membrane"/>
    <property type="evidence" value="ECO:0007005"/>
    <property type="project" value="TAIR"/>
</dbReference>
<dbReference type="GO" id="GO:0099503">
    <property type="term" value="C:secretory vesicle"/>
    <property type="evidence" value="ECO:0007005"/>
    <property type="project" value="TAIR"/>
</dbReference>
<dbReference type="GO" id="GO:0004553">
    <property type="term" value="F:hydrolase activity, hydrolyzing O-glycosyl compounds"/>
    <property type="evidence" value="ECO:0007669"/>
    <property type="project" value="InterPro"/>
</dbReference>
<dbReference type="GO" id="GO:0030247">
    <property type="term" value="F:polysaccharide binding"/>
    <property type="evidence" value="ECO:0000250"/>
    <property type="project" value="UniProtKB"/>
</dbReference>
<dbReference type="GO" id="GO:0016762">
    <property type="term" value="F:xyloglucan:xyloglucosyl transferase activity"/>
    <property type="evidence" value="ECO:0000314"/>
    <property type="project" value="TAIR"/>
</dbReference>
<dbReference type="GO" id="GO:0042546">
    <property type="term" value="P:cell wall biogenesis"/>
    <property type="evidence" value="ECO:0007669"/>
    <property type="project" value="InterPro"/>
</dbReference>
<dbReference type="GO" id="GO:0009828">
    <property type="term" value="P:plant-type cell wall loosening"/>
    <property type="evidence" value="ECO:0000304"/>
    <property type="project" value="TAIR"/>
</dbReference>
<dbReference type="GO" id="GO:0071669">
    <property type="term" value="P:plant-type cell wall organization or biogenesis"/>
    <property type="evidence" value="ECO:0000315"/>
    <property type="project" value="TAIR"/>
</dbReference>
<dbReference type="GO" id="GO:0010411">
    <property type="term" value="P:xyloglucan metabolic process"/>
    <property type="evidence" value="ECO:0007669"/>
    <property type="project" value="InterPro"/>
</dbReference>
<dbReference type="CDD" id="cd02176">
    <property type="entry name" value="GH16_XET"/>
    <property type="match status" value="1"/>
</dbReference>
<dbReference type="FunFam" id="2.60.120.200:FF:000025">
    <property type="entry name" value="Xyloglucan endotransglucosylase/hydrolase"/>
    <property type="match status" value="1"/>
</dbReference>
<dbReference type="Gene3D" id="2.60.120.200">
    <property type="match status" value="1"/>
</dbReference>
<dbReference type="InterPro" id="IPR044791">
    <property type="entry name" value="Beta-glucanase/XTH"/>
</dbReference>
<dbReference type="InterPro" id="IPR013320">
    <property type="entry name" value="ConA-like_dom_sf"/>
</dbReference>
<dbReference type="InterPro" id="IPR000757">
    <property type="entry name" value="GH16"/>
</dbReference>
<dbReference type="InterPro" id="IPR008263">
    <property type="entry name" value="GH16_AS"/>
</dbReference>
<dbReference type="InterPro" id="IPR010713">
    <property type="entry name" value="XET_C"/>
</dbReference>
<dbReference type="InterPro" id="IPR016455">
    <property type="entry name" value="XTH"/>
</dbReference>
<dbReference type="PANTHER" id="PTHR31062">
    <property type="entry name" value="XYLOGLUCAN ENDOTRANSGLUCOSYLASE/HYDROLASE PROTEIN 8-RELATED"/>
    <property type="match status" value="1"/>
</dbReference>
<dbReference type="Pfam" id="PF00722">
    <property type="entry name" value="Glyco_hydro_16"/>
    <property type="match status" value="1"/>
</dbReference>
<dbReference type="Pfam" id="PF06955">
    <property type="entry name" value="XET_C"/>
    <property type="match status" value="1"/>
</dbReference>
<dbReference type="PIRSF" id="PIRSF005604">
    <property type="entry name" value="XET"/>
    <property type="match status" value="1"/>
</dbReference>
<dbReference type="SUPFAM" id="SSF49899">
    <property type="entry name" value="Concanavalin A-like lectins/glucanases"/>
    <property type="match status" value="1"/>
</dbReference>
<dbReference type="PROSITE" id="PS01034">
    <property type="entry name" value="GH16_1"/>
    <property type="match status" value="1"/>
</dbReference>
<dbReference type="PROSITE" id="PS51762">
    <property type="entry name" value="GH16_2"/>
    <property type="match status" value="1"/>
</dbReference>
<protein>
    <recommendedName>
        <fullName>Xyloglucan endotransglucosylase/hydrolase protein 24</fullName>
        <shortName>At-XTH24</shortName>
        <shortName>XTH-24</shortName>
        <ecNumber>2.4.1.207</ecNumber>
    </recommendedName>
    <alternativeName>
        <fullName>Endo-xyloglucan transferase</fullName>
    </alternativeName>
    <alternativeName>
        <fullName>Meristem protein 5</fullName>
        <shortName>MERI-5 protein</shortName>
        <shortName>MERI5 protein</shortName>
    </alternativeName>
    <alternativeName>
        <fullName>Xyloglucan endo-1,4-beta-D-glucanase</fullName>
    </alternativeName>
</protein>
<accession>P24806</accession>
<accession>O64956</accession>
<accession>Q39148</accession>
<accession>Q39149</accession>
<accession>Q41904</accession>
<accession>Q8LDQ0</accession>
<feature type="signal peptide" evidence="3">
    <location>
        <begin position="1"/>
        <end position="21"/>
    </location>
</feature>
<feature type="chain" id="PRO_0000011824" description="Xyloglucan endotransglucosylase/hydrolase protein 24">
    <location>
        <begin position="22"/>
        <end position="269"/>
    </location>
</feature>
<feature type="domain" description="GH16" evidence="4">
    <location>
        <begin position="22"/>
        <end position="212"/>
    </location>
</feature>
<feature type="active site" description="Nucleophile" evidence="5">
    <location>
        <position position="98"/>
    </location>
</feature>
<feature type="active site" description="Proton donor" evidence="5">
    <location>
        <position position="102"/>
    </location>
</feature>
<feature type="binding site" evidence="2">
    <location>
        <position position="102"/>
    </location>
    <ligand>
        <name>xyloglucan</name>
        <dbReference type="ChEBI" id="CHEBI:18233"/>
    </ligand>
</feature>
<feature type="binding site" evidence="2">
    <location>
        <begin position="115"/>
        <end position="117"/>
    </location>
    <ligand>
        <name>xyloglucan</name>
        <dbReference type="ChEBI" id="CHEBI:18233"/>
    </ligand>
</feature>
<feature type="binding site" evidence="2">
    <location>
        <begin position="125"/>
        <end position="127"/>
    </location>
    <ligand>
        <name>xyloglucan</name>
        <dbReference type="ChEBI" id="CHEBI:18233"/>
    </ligand>
</feature>
<feature type="binding site" evidence="2">
    <location>
        <begin position="191"/>
        <end position="192"/>
    </location>
    <ligand>
        <name>xyloglucan</name>
        <dbReference type="ChEBI" id="CHEBI:18233"/>
    </ligand>
</feature>
<feature type="binding site" evidence="2">
    <location>
        <position position="196"/>
    </location>
    <ligand>
        <name>xyloglucan</name>
        <dbReference type="ChEBI" id="CHEBI:18233"/>
    </ligand>
</feature>
<feature type="binding site" evidence="2">
    <location>
        <position position="256"/>
    </location>
    <ligand>
        <name>xyloglucan</name>
        <dbReference type="ChEBI" id="CHEBI:18233"/>
    </ligand>
</feature>
<feature type="site" description="Important for catalytic activity" evidence="2">
    <location>
        <position position="100"/>
    </location>
</feature>
<feature type="glycosylation site" description="N-linked (GlcNAc...) asparagine" evidence="11">
    <location>
        <position position="106"/>
    </location>
</feature>
<feature type="disulfide bond" evidence="2">
    <location>
        <begin position="251"/>
        <end position="265"/>
    </location>
</feature>
<feature type="sequence conflict" description="In Ref. 6; AAM63080." evidence="10" ref="6">
    <original>L</original>
    <variation>F</variation>
    <location>
        <position position="65"/>
    </location>
</feature>
<feature type="sequence conflict" description="In Ref. 8; AAC39467." evidence="10" ref="8">
    <original>GS</original>
    <variation>DR</variation>
    <location>
        <begin position="93"/>
        <end position="94"/>
    </location>
</feature>
<feature type="sequence conflict" description="In Ref. 1." evidence="10" ref="1">
    <original>A</original>
    <variation>G</variation>
    <location>
        <position position="184"/>
    </location>
</feature>
<keyword id="KW-0052">Apoplast</keyword>
<keyword id="KW-0134">Cell wall</keyword>
<keyword id="KW-0961">Cell wall biogenesis/degradation</keyword>
<keyword id="KW-1015">Disulfide bond</keyword>
<keyword id="KW-0325">Glycoprotein</keyword>
<keyword id="KW-0326">Glycosidase</keyword>
<keyword id="KW-0378">Hydrolase</keyword>
<keyword id="KW-1185">Reference proteome</keyword>
<keyword id="KW-0964">Secreted</keyword>
<keyword id="KW-0732">Signal</keyword>
<keyword id="KW-0808">Transferase</keyword>